<organism>
    <name type="scientific">Arabidopsis thaliana</name>
    <name type="common">Mouse-ear cress</name>
    <dbReference type="NCBI Taxonomy" id="3702"/>
    <lineage>
        <taxon>Eukaryota</taxon>
        <taxon>Viridiplantae</taxon>
        <taxon>Streptophyta</taxon>
        <taxon>Embryophyta</taxon>
        <taxon>Tracheophyta</taxon>
        <taxon>Spermatophyta</taxon>
        <taxon>Magnoliopsida</taxon>
        <taxon>eudicotyledons</taxon>
        <taxon>Gunneridae</taxon>
        <taxon>Pentapetalae</taxon>
        <taxon>rosids</taxon>
        <taxon>malvids</taxon>
        <taxon>Brassicales</taxon>
        <taxon>Brassicaceae</taxon>
        <taxon>Camelineae</taxon>
        <taxon>Arabidopsis</taxon>
    </lineage>
</organism>
<keyword id="KW-0106">Calcium</keyword>
<keyword id="KW-1015">Disulfide bond</keyword>
<keyword id="KW-0325">Glycoprotein</keyword>
<keyword id="KW-0349">Heme</keyword>
<keyword id="KW-0408">Iron</keyword>
<keyword id="KW-0479">Metal-binding</keyword>
<keyword id="KW-0560">Oxidoreductase</keyword>
<keyword id="KW-0575">Peroxidase</keyword>
<keyword id="KW-1185">Reference proteome</keyword>
<keyword id="KW-0964">Secreted</keyword>
<keyword id="KW-0732">Signal</keyword>
<comment type="function">
    <text>Removal of H(2)O(2), oxidation of toxic reductants, biosynthesis and degradation of lignin, suberization, auxin catabolism, response to environmental stresses such as wounding, pathogen attack and oxidative stress. These functions might be dependent on each isozyme/isoform in each plant tissue.</text>
</comment>
<comment type="catalytic activity">
    <reaction>
        <text>2 a phenolic donor + H2O2 = 2 a phenolic radical donor + 2 H2O</text>
        <dbReference type="Rhea" id="RHEA:56136"/>
        <dbReference type="ChEBI" id="CHEBI:15377"/>
        <dbReference type="ChEBI" id="CHEBI:16240"/>
        <dbReference type="ChEBI" id="CHEBI:139520"/>
        <dbReference type="ChEBI" id="CHEBI:139521"/>
        <dbReference type="EC" id="1.11.1.7"/>
    </reaction>
</comment>
<comment type="cofactor">
    <cofactor evidence="2">
        <name>heme b</name>
        <dbReference type="ChEBI" id="CHEBI:60344"/>
    </cofactor>
    <text evidence="2">Binds 1 heme b (iron(II)-protoporphyrin IX) group per subunit.</text>
</comment>
<comment type="cofactor">
    <cofactor evidence="2">
        <name>Ca(2+)</name>
        <dbReference type="ChEBI" id="CHEBI:29108"/>
    </cofactor>
    <text evidence="2">Binds 2 calcium ions per subunit.</text>
</comment>
<comment type="subcellular location">
    <subcellularLocation>
        <location evidence="2">Secreted</location>
    </subcellularLocation>
</comment>
<comment type="developmental stage">
    <text evidence="4">Up-regulated during leaf development.</text>
</comment>
<comment type="miscellaneous">
    <text>There are 73 peroxidase genes in A.thaliana.</text>
</comment>
<comment type="similarity">
    <text evidence="2">Belongs to the peroxidase family. Classical plant (class III) peroxidase subfamily.</text>
</comment>
<comment type="sequence caution" evidence="5">
    <conflict type="erroneous initiation">
        <sequence resource="EMBL-CDS" id="AAL40837"/>
    </conflict>
    <text>Truncated N-terminus.</text>
</comment>
<comment type="sequence caution" evidence="5">
    <conflict type="erroneous initiation">
        <sequence resource="EMBL-CDS" id="CAB38800"/>
    </conflict>
    <text>Truncated N-terminus.</text>
</comment>
<comment type="sequence caution" evidence="5">
    <conflict type="erroneous initiation">
        <sequence resource="EMBL-CDS" id="CAB80059"/>
    </conflict>
    <text>Truncated N-terminus.</text>
</comment>
<evidence type="ECO:0000255" key="1"/>
<evidence type="ECO:0000255" key="2">
    <source>
        <dbReference type="PROSITE-ProRule" id="PRU00297"/>
    </source>
</evidence>
<evidence type="ECO:0000255" key="3">
    <source>
        <dbReference type="PROSITE-ProRule" id="PRU10012"/>
    </source>
</evidence>
<evidence type="ECO:0000269" key="4">
    <source ref="5"/>
</evidence>
<evidence type="ECO:0000305" key="5"/>
<gene>
    <name type="primary">PER47</name>
    <name type="synonym">P47</name>
    <name type="ordered locus">At4g33420</name>
    <name type="ORF">F17M5.180</name>
</gene>
<proteinExistence type="evidence at transcript level"/>
<protein>
    <recommendedName>
        <fullName>Peroxidase 47</fullName>
        <shortName>Atperox P47</shortName>
        <ecNumber>1.11.1.7</ecNumber>
    </recommendedName>
    <alternativeName>
        <fullName>ATP32</fullName>
    </alternativeName>
</protein>
<feature type="signal peptide" evidence="1">
    <location>
        <begin position="1"/>
        <end position="36"/>
    </location>
</feature>
<feature type="chain" id="PRO_0000023713" description="Peroxidase 47">
    <location>
        <begin position="37"/>
        <end position="325"/>
    </location>
</feature>
<feature type="active site" description="Proton acceptor" evidence="2 3">
    <location>
        <position position="77"/>
    </location>
</feature>
<feature type="binding site" evidence="2">
    <location>
        <position position="78"/>
    </location>
    <ligand>
        <name>Ca(2+)</name>
        <dbReference type="ChEBI" id="CHEBI:29108"/>
        <label>1</label>
    </ligand>
</feature>
<feature type="binding site" evidence="2">
    <location>
        <position position="83"/>
    </location>
    <ligand>
        <name>Ca(2+)</name>
        <dbReference type="ChEBI" id="CHEBI:29108"/>
        <label>1</label>
    </ligand>
</feature>
<feature type="binding site" evidence="2">
    <location>
        <position position="85"/>
    </location>
    <ligand>
        <name>Ca(2+)</name>
        <dbReference type="ChEBI" id="CHEBI:29108"/>
        <label>1</label>
    </ligand>
</feature>
<feature type="binding site" evidence="2">
    <location>
        <position position="87"/>
    </location>
    <ligand>
        <name>Ca(2+)</name>
        <dbReference type="ChEBI" id="CHEBI:29108"/>
        <label>1</label>
    </ligand>
</feature>
<feature type="binding site" evidence="2">
    <location>
        <position position="172"/>
    </location>
    <ligand>
        <name>substrate</name>
    </ligand>
</feature>
<feature type="binding site" description="axial binding residue" evidence="2">
    <location>
        <position position="202"/>
    </location>
    <ligand>
        <name>heme b</name>
        <dbReference type="ChEBI" id="CHEBI:60344"/>
    </ligand>
    <ligandPart>
        <name>Fe</name>
        <dbReference type="ChEBI" id="CHEBI:18248"/>
    </ligandPart>
</feature>
<feature type="binding site" evidence="2">
    <location>
        <position position="203"/>
    </location>
    <ligand>
        <name>Ca(2+)</name>
        <dbReference type="ChEBI" id="CHEBI:29108"/>
        <label>2</label>
    </ligand>
</feature>
<feature type="binding site" evidence="2">
    <location>
        <position position="246"/>
    </location>
    <ligand>
        <name>Ca(2+)</name>
        <dbReference type="ChEBI" id="CHEBI:29108"/>
        <label>2</label>
    </ligand>
</feature>
<feature type="binding site" evidence="2">
    <location>
        <position position="248"/>
    </location>
    <ligand>
        <name>Ca(2+)</name>
        <dbReference type="ChEBI" id="CHEBI:29108"/>
        <label>2</label>
    </ligand>
</feature>
<feature type="binding site" evidence="2">
    <location>
        <position position="253"/>
    </location>
    <ligand>
        <name>Ca(2+)</name>
        <dbReference type="ChEBI" id="CHEBI:29108"/>
        <label>2</label>
    </ligand>
</feature>
<feature type="site" description="Transition state stabilizer" evidence="2">
    <location>
        <position position="73"/>
    </location>
</feature>
<feature type="glycosylation site" description="N-linked (GlcNAc...) asparagine" evidence="1">
    <location>
        <position position="177"/>
    </location>
</feature>
<feature type="disulfide bond" evidence="2">
    <location>
        <begin position="46"/>
        <end position="125"/>
    </location>
</feature>
<feature type="disulfide bond" evidence="2">
    <location>
        <begin position="79"/>
        <end position="84"/>
    </location>
</feature>
<feature type="disulfide bond" evidence="2">
    <location>
        <begin position="131"/>
        <end position="321"/>
    </location>
</feature>
<feature type="disulfide bond" evidence="2">
    <location>
        <begin position="209"/>
        <end position="235"/>
    </location>
</feature>
<dbReference type="EC" id="1.11.1.7"/>
<dbReference type="EMBL" id="AF451951">
    <property type="protein sequence ID" value="AAL40837.1"/>
    <property type="status" value="ALT_INIT"/>
    <property type="molecule type" value="mRNA"/>
</dbReference>
<dbReference type="EMBL" id="AL035678">
    <property type="protein sequence ID" value="CAB38800.1"/>
    <property type="status" value="ALT_INIT"/>
    <property type="molecule type" value="Genomic_DNA"/>
</dbReference>
<dbReference type="EMBL" id="AL161583">
    <property type="protein sequence ID" value="CAB80059.1"/>
    <property type="status" value="ALT_INIT"/>
    <property type="molecule type" value="Genomic_DNA"/>
</dbReference>
<dbReference type="EMBL" id="CP002687">
    <property type="protein sequence ID" value="AEE86222.1"/>
    <property type="molecule type" value="Genomic_DNA"/>
</dbReference>
<dbReference type="EMBL" id="BT044614">
    <property type="protein sequence ID" value="ACI31314.1"/>
    <property type="molecule type" value="mRNA"/>
</dbReference>
<dbReference type="PIR" id="T05993">
    <property type="entry name" value="T05993"/>
</dbReference>
<dbReference type="RefSeq" id="NP_001320124.1">
    <property type="nucleotide sequence ID" value="NM_001342215.1"/>
</dbReference>
<dbReference type="SMR" id="Q9SZB9"/>
<dbReference type="FunCoup" id="Q9SZB9">
    <property type="interactions" value="157"/>
</dbReference>
<dbReference type="STRING" id="3702.Q9SZB9"/>
<dbReference type="PeroxiBase" id="213">
    <property type="entry name" value="AtPrx47"/>
</dbReference>
<dbReference type="GlyCosmos" id="Q9SZB9">
    <property type="glycosylation" value="1 site, No reported glycans"/>
</dbReference>
<dbReference type="GlyGen" id="Q9SZB9">
    <property type="glycosylation" value="1 site"/>
</dbReference>
<dbReference type="PaxDb" id="3702-AT4G33420.1"/>
<dbReference type="EnsemblPlants" id="AT4G33420.1">
    <property type="protein sequence ID" value="AT4G33420.1"/>
    <property type="gene ID" value="AT4G33420"/>
</dbReference>
<dbReference type="GeneID" id="829479"/>
<dbReference type="Gramene" id="AT4G33420.1">
    <property type="protein sequence ID" value="AT4G33420.1"/>
    <property type="gene ID" value="AT4G33420"/>
</dbReference>
<dbReference type="KEGG" id="ath:AT4G33420"/>
<dbReference type="Araport" id="AT4G33420"/>
<dbReference type="TAIR" id="AT4G33420">
    <property type="gene designation" value="PRX47"/>
</dbReference>
<dbReference type="eggNOG" id="ENOG502QSBQ">
    <property type="taxonomic scope" value="Eukaryota"/>
</dbReference>
<dbReference type="HOGENOM" id="CLU_010543_0_3_1"/>
<dbReference type="InParanoid" id="Q9SZB9"/>
<dbReference type="OMA" id="VNSYAMN"/>
<dbReference type="PRO" id="PR:Q9SZB9"/>
<dbReference type="Proteomes" id="UP000006548">
    <property type="component" value="Chromosome 4"/>
</dbReference>
<dbReference type="ExpressionAtlas" id="Q9SZB9">
    <property type="expression patterns" value="baseline and differential"/>
</dbReference>
<dbReference type="GO" id="GO:0005576">
    <property type="term" value="C:extracellular region"/>
    <property type="evidence" value="ECO:0007669"/>
    <property type="project" value="UniProtKB-SubCell"/>
</dbReference>
<dbReference type="GO" id="GO:0020037">
    <property type="term" value="F:heme binding"/>
    <property type="evidence" value="ECO:0007669"/>
    <property type="project" value="InterPro"/>
</dbReference>
<dbReference type="GO" id="GO:0140825">
    <property type="term" value="F:lactoperoxidase activity"/>
    <property type="evidence" value="ECO:0007669"/>
    <property type="project" value="UniProtKB-EC"/>
</dbReference>
<dbReference type="GO" id="GO:0046872">
    <property type="term" value="F:metal ion binding"/>
    <property type="evidence" value="ECO:0007669"/>
    <property type="project" value="UniProtKB-KW"/>
</dbReference>
<dbReference type="GO" id="GO:0042744">
    <property type="term" value="P:hydrogen peroxide catabolic process"/>
    <property type="evidence" value="ECO:0007669"/>
    <property type="project" value="InterPro"/>
</dbReference>
<dbReference type="GO" id="GO:0006979">
    <property type="term" value="P:response to oxidative stress"/>
    <property type="evidence" value="ECO:0007669"/>
    <property type="project" value="InterPro"/>
</dbReference>
<dbReference type="CDD" id="cd00693">
    <property type="entry name" value="secretory_peroxidase"/>
    <property type="match status" value="1"/>
</dbReference>
<dbReference type="FunFam" id="1.10.420.10:FF:000006">
    <property type="entry name" value="Peroxidase"/>
    <property type="match status" value="1"/>
</dbReference>
<dbReference type="FunFam" id="1.10.520.10:FF:000001">
    <property type="entry name" value="Peroxidase"/>
    <property type="match status" value="1"/>
</dbReference>
<dbReference type="Gene3D" id="1.10.520.10">
    <property type="match status" value="1"/>
</dbReference>
<dbReference type="Gene3D" id="1.10.420.10">
    <property type="entry name" value="Peroxidase, domain 2"/>
    <property type="match status" value="1"/>
</dbReference>
<dbReference type="InterPro" id="IPR002016">
    <property type="entry name" value="Haem_peroxidase"/>
</dbReference>
<dbReference type="InterPro" id="IPR010255">
    <property type="entry name" value="Haem_peroxidase_sf"/>
</dbReference>
<dbReference type="InterPro" id="IPR000823">
    <property type="entry name" value="Peroxidase_pln"/>
</dbReference>
<dbReference type="InterPro" id="IPR019794">
    <property type="entry name" value="Peroxidases_AS"/>
</dbReference>
<dbReference type="InterPro" id="IPR019793">
    <property type="entry name" value="Peroxidases_heam-ligand_BS"/>
</dbReference>
<dbReference type="InterPro" id="IPR033905">
    <property type="entry name" value="Secretory_peroxidase"/>
</dbReference>
<dbReference type="PANTHER" id="PTHR31517">
    <property type="match status" value="1"/>
</dbReference>
<dbReference type="PANTHER" id="PTHR31517:SF51">
    <property type="entry name" value="PEROXIDASE 55"/>
    <property type="match status" value="1"/>
</dbReference>
<dbReference type="Pfam" id="PF00141">
    <property type="entry name" value="peroxidase"/>
    <property type="match status" value="1"/>
</dbReference>
<dbReference type="PRINTS" id="PR00458">
    <property type="entry name" value="PEROXIDASE"/>
</dbReference>
<dbReference type="PRINTS" id="PR00461">
    <property type="entry name" value="PLPEROXIDASE"/>
</dbReference>
<dbReference type="SUPFAM" id="SSF48113">
    <property type="entry name" value="Heme-dependent peroxidases"/>
    <property type="match status" value="1"/>
</dbReference>
<dbReference type="PROSITE" id="PS00435">
    <property type="entry name" value="PEROXIDASE_1"/>
    <property type="match status" value="1"/>
</dbReference>
<dbReference type="PROSITE" id="PS00436">
    <property type="entry name" value="PEROXIDASE_2"/>
    <property type="match status" value="1"/>
</dbReference>
<dbReference type="PROSITE" id="PS50873">
    <property type="entry name" value="PEROXIDASE_4"/>
    <property type="match status" value="1"/>
</dbReference>
<reference key="1">
    <citation type="journal article" date="2002" name="Eur. J. Biochem.">
        <title>Structural diversity and transcription of class III peroxidases from Arabidopsis thaliana.</title>
        <authorList>
            <person name="Welinder K.G."/>
            <person name="Justesen A.F."/>
            <person name="Kjaersgaard I.V.H."/>
            <person name="Jensen R.B."/>
            <person name="Rasmussen S.K."/>
            <person name="Jespersen H.M."/>
            <person name="Duroux L."/>
        </authorList>
    </citation>
    <scope>NUCLEOTIDE SEQUENCE [MRNA]</scope>
    <source>
        <strain>cv. Columbia</strain>
    </source>
</reference>
<reference key="2">
    <citation type="journal article" date="1999" name="Nature">
        <title>Sequence and analysis of chromosome 4 of the plant Arabidopsis thaliana.</title>
        <authorList>
            <person name="Mayer K.F.X."/>
            <person name="Schueller C."/>
            <person name="Wambutt R."/>
            <person name="Murphy G."/>
            <person name="Volckaert G."/>
            <person name="Pohl T."/>
            <person name="Duesterhoeft A."/>
            <person name="Stiekema W."/>
            <person name="Entian K.-D."/>
            <person name="Terryn N."/>
            <person name="Harris B."/>
            <person name="Ansorge W."/>
            <person name="Brandt P."/>
            <person name="Grivell L.A."/>
            <person name="Rieger M."/>
            <person name="Weichselgartner M."/>
            <person name="de Simone V."/>
            <person name="Obermaier B."/>
            <person name="Mache R."/>
            <person name="Mueller M."/>
            <person name="Kreis M."/>
            <person name="Delseny M."/>
            <person name="Puigdomenech P."/>
            <person name="Watson M."/>
            <person name="Schmidtheini T."/>
            <person name="Reichert B."/>
            <person name="Portetelle D."/>
            <person name="Perez-Alonso M."/>
            <person name="Boutry M."/>
            <person name="Bancroft I."/>
            <person name="Vos P."/>
            <person name="Hoheisel J."/>
            <person name="Zimmermann W."/>
            <person name="Wedler H."/>
            <person name="Ridley P."/>
            <person name="Langham S.-A."/>
            <person name="McCullagh B."/>
            <person name="Bilham L."/>
            <person name="Robben J."/>
            <person name="van der Schueren J."/>
            <person name="Grymonprez B."/>
            <person name="Chuang Y.-J."/>
            <person name="Vandenbussche F."/>
            <person name="Braeken M."/>
            <person name="Weltjens I."/>
            <person name="Voet M."/>
            <person name="Bastiaens I."/>
            <person name="Aert R."/>
            <person name="Defoor E."/>
            <person name="Weitzenegger T."/>
            <person name="Bothe G."/>
            <person name="Ramsperger U."/>
            <person name="Hilbert H."/>
            <person name="Braun M."/>
            <person name="Holzer E."/>
            <person name="Brandt A."/>
            <person name="Peters S."/>
            <person name="van Staveren M."/>
            <person name="Dirkse W."/>
            <person name="Mooijman P."/>
            <person name="Klein Lankhorst R."/>
            <person name="Rose M."/>
            <person name="Hauf J."/>
            <person name="Koetter P."/>
            <person name="Berneiser S."/>
            <person name="Hempel S."/>
            <person name="Feldpausch M."/>
            <person name="Lamberth S."/>
            <person name="Van den Daele H."/>
            <person name="De Keyser A."/>
            <person name="Buysshaert C."/>
            <person name="Gielen J."/>
            <person name="Villarroel R."/>
            <person name="De Clercq R."/>
            <person name="van Montagu M."/>
            <person name="Rogers J."/>
            <person name="Cronin A."/>
            <person name="Quail M.A."/>
            <person name="Bray-Allen S."/>
            <person name="Clark L."/>
            <person name="Doggett J."/>
            <person name="Hall S."/>
            <person name="Kay M."/>
            <person name="Lennard N."/>
            <person name="McLay K."/>
            <person name="Mayes R."/>
            <person name="Pettett A."/>
            <person name="Rajandream M.A."/>
            <person name="Lyne M."/>
            <person name="Benes V."/>
            <person name="Rechmann S."/>
            <person name="Borkova D."/>
            <person name="Bloecker H."/>
            <person name="Scharfe M."/>
            <person name="Grimm M."/>
            <person name="Loehnert T.-H."/>
            <person name="Dose S."/>
            <person name="de Haan M."/>
            <person name="Maarse A.C."/>
            <person name="Schaefer M."/>
            <person name="Mueller-Auer S."/>
            <person name="Gabel C."/>
            <person name="Fuchs M."/>
            <person name="Fartmann B."/>
            <person name="Granderath K."/>
            <person name="Dauner D."/>
            <person name="Herzl A."/>
            <person name="Neumann S."/>
            <person name="Argiriou A."/>
            <person name="Vitale D."/>
            <person name="Liguori R."/>
            <person name="Piravandi E."/>
            <person name="Massenet O."/>
            <person name="Quigley F."/>
            <person name="Clabauld G."/>
            <person name="Muendlein A."/>
            <person name="Felber R."/>
            <person name="Schnabl S."/>
            <person name="Hiller R."/>
            <person name="Schmidt W."/>
            <person name="Lecharny A."/>
            <person name="Aubourg S."/>
            <person name="Chefdor F."/>
            <person name="Cooke R."/>
            <person name="Berger C."/>
            <person name="Monfort A."/>
            <person name="Casacuberta E."/>
            <person name="Gibbons T."/>
            <person name="Weber N."/>
            <person name="Vandenbol M."/>
            <person name="Bargues M."/>
            <person name="Terol J."/>
            <person name="Torres A."/>
            <person name="Perez-Perez A."/>
            <person name="Purnelle B."/>
            <person name="Bent E."/>
            <person name="Johnson S."/>
            <person name="Tacon D."/>
            <person name="Jesse T."/>
            <person name="Heijnen L."/>
            <person name="Schwarz S."/>
            <person name="Scholler P."/>
            <person name="Heber S."/>
            <person name="Francs P."/>
            <person name="Bielke C."/>
            <person name="Frishman D."/>
            <person name="Haase D."/>
            <person name="Lemcke K."/>
            <person name="Mewes H.-W."/>
            <person name="Stocker S."/>
            <person name="Zaccaria P."/>
            <person name="Bevan M."/>
            <person name="Wilson R.K."/>
            <person name="de la Bastide M."/>
            <person name="Habermann K."/>
            <person name="Parnell L."/>
            <person name="Dedhia N."/>
            <person name="Gnoj L."/>
            <person name="Schutz K."/>
            <person name="Huang E."/>
            <person name="Spiegel L."/>
            <person name="Sekhon M."/>
            <person name="Murray J."/>
            <person name="Sheet P."/>
            <person name="Cordes M."/>
            <person name="Abu-Threideh J."/>
            <person name="Stoneking T."/>
            <person name="Kalicki J."/>
            <person name="Graves T."/>
            <person name="Harmon G."/>
            <person name="Edwards J."/>
            <person name="Latreille P."/>
            <person name="Courtney L."/>
            <person name="Cloud J."/>
            <person name="Abbott A."/>
            <person name="Scott K."/>
            <person name="Johnson D."/>
            <person name="Minx P."/>
            <person name="Bentley D."/>
            <person name="Fulton B."/>
            <person name="Miller N."/>
            <person name="Greco T."/>
            <person name="Kemp K."/>
            <person name="Kramer J."/>
            <person name="Fulton L."/>
            <person name="Mardis E."/>
            <person name="Dante M."/>
            <person name="Pepin K."/>
            <person name="Hillier L.W."/>
            <person name="Nelson J."/>
            <person name="Spieth J."/>
            <person name="Ryan E."/>
            <person name="Andrews S."/>
            <person name="Geisel C."/>
            <person name="Layman D."/>
            <person name="Du H."/>
            <person name="Ali J."/>
            <person name="Berghoff A."/>
            <person name="Jones K."/>
            <person name="Drone K."/>
            <person name="Cotton M."/>
            <person name="Joshu C."/>
            <person name="Antonoiu B."/>
            <person name="Zidanic M."/>
            <person name="Strong C."/>
            <person name="Sun H."/>
            <person name="Lamar B."/>
            <person name="Yordan C."/>
            <person name="Ma P."/>
            <person name="Zhong J."/>
            <person name="Preston R."/>
            <person name="Vil D."/>
            <person name="Shekher M."/>
            <person name="Matero A."/>
            <person name="Shah R."/>
            <person name="Swaby I.K."/>
            <person name="O'Shaughnessy A."/>
            <person name="Rodriguez M."/>
            <person name="Hoffman J."/>
            <person name="Till S."/>
            <person name="Granat S."/>
            <person name="Shohdy N."/>
            <person name="Hasegawa A."/>
            <person name="Hameed A."/>
            <person name="Lodhi M."/>
            <person name="Johnson A."/>
            <person name="Chen E."/>
            <person name="Marra M.A."/>
            <person name="Martienssen R."/>
            <person name="McCombie W.R."/>
        </authorList>
    </citation>
    <scope>NUCLEOTIDE SEQUENCE [LARGE SCALE GENOMIC DNA]</scope>
    <source>
        <strain>cv. Columbia</strain>
    </source>
</reference>
<reference key="3">
    <citation type="journal article" date="2017" name="Plant J.">
        <title>Araport11: a complete reannotation of the Arabidopsis thaliana reference genome.</title>
        <authorList>
            <person name="Cheng C.Y."/>
            <person name="Krishnakumar V."/>
            <person name="Chan A.P."/>
            <person name="Thibaud-Nissen F."/>
            <person name="Schobel S."/>
            <person name="Town C.D."/>
        </authorList>
    </citation>
    <scope>GENOME REANNOTATION</scope>
    <source>
        <strain>cv. Columbia</strain>
    </source>
</reference>
<reference key="4">
    <citation type="submission" date="2008-10" db="EMBL/GenBank/DDBJ databases">
        <title>Arabidopsis ORF clones.</title>
        <authorList>
            <person name="De Los Reyes C."/>
            <person name="Quan R."/>
            <person name="Chen H."/>
            <person name="Bautista V.R."/>
            <person name="Kim C.J."/>
            <person name="Ecker J.R."/>
        </authorList>
    </citation>
    <scope>NUCLEOTIDE SEQUENCE [LARGE SCALE MRNA]</scope>
    <source>
        <strain>cv. Columbia</strain>
    </source>
</reference>
<reference key="5">
    <citation type="journal article" date="2001" name="Plant Physiol. Biochem.">
        <title>Toward elucidating the global gene expression patterns of developing Arabidopsis: parallel analysis of 8300 genes by a high-density oligonucleotide probe array.</title>
        <authorList>
            <person name="Zhu T."/>
            <person name="Budworth P."/>
            <person name="Han B."/>
            <person name="Brown D."/>
            <person name="Chang H.-S."/>
            <person name="Zou G."/>
            <person name="Wang X."/>
        </authorList>
    </citation>
    <scope>DEVELOPMENTAL STAGE</scope>
    <source>
        <strain>cv. Columbia</strain>
    </source>
</reference>
<reference key="6">
    <citation type="journal article" date="2002" name="Gene">
        <title>Analysis and expression of the class III peroxidase large gene family in Arabidopsis thaliana.</title>
        <authorList>
            <person name="Tognolli M."/>
            <person name="Penel C."/>
            <person name="Greppin H."/>
            <person name="Simon P."/>
        </authorList>
    </citation>
    <scope>GENE FAMILY ORGANIZATION</scope>
    <scope>NOMENCLATURE</scope>
    <source>
        <strain>cv. Columbia</strain>
    </source>
</reference>
<sequence>MLTRFKKQNNKMVRANIVSMVLLMHAIVGFPFHARGLSMTYYMMSCPFAEQIVKNSVNNALQADPTLAAGLIRMLFHDCFIEGCDASILLDSTKDNTAEKDSPANLSLRGYEIIDDAKEKIENRCPGVVSCADIVAMAARDAVFWAGGPYYDIPKGRFDGKRSKIEDTRNLPSPFLNASQLIQTFGQRGFTPQDVVALSGAHTLGVARCSSFKARLTVPDSSLDSTFANTLSKTCSAGDNAEQPFDATRNDFDNAYFNALQMKSGVLFSDQTLFNTPRTRNLVNGYALNQAKFFFDFQQAMRKMSNLDVKLGSQGEVRQNCRSIN</sequence>
<name>PER47_ARATH</name>
<accession>Q9SZB9</accession>
<accession>B5X0P5</accession>